<gene>
    <name evidence="1" type="primary">dnaJ</name>
</gene>
<evidence type="ECO:0000255" key="1">
    <source>
        <dbReference type="HAMAP-Rule" id="MF_01152"/>
    </source>
</evidence>
<reference key="1">
    <citation type="submission" date="2000-06" db="EMBL/GenBank/DDBJ databases">
        <title>Cloning, sequencing and analysis of dnaK-operon from Acholeplasma laidlawii.</title>
        <authorList>
            <person name="Usoskin D.G."/>
            <person name="Vonski M.S."/>
            <person name="Drapchinskaya N.L."/>
            <person name="Borchsenius S.N."/>
        </authorList>
    </citation>
    <scope>NUCLEOTIDE SEQUENCE [GENOMIC DNA]</scope>
    <source>
        <strain>ATCC 23206 / DSM 23060 / NBRC 14400 / NCTC 10116 / PG-8</strain>
    </source>
</reference>
<comment type="function">
    <text evidence="1">Participates actively in the response to hyperosmotic and heat shock by preventing the aggregation of stress-denatured proteins and by disaggregating proteins, also in an autonomous, DnaK-independent fashion. Unfolded proteins bind initially to DnaJ; upon interaction with the DnaJ-bound protein, DnaK hydrolyzes its bound ATP, resulting in the formation of a stable complex. GrpE releases ADP from DnaK; ATP binding to DnaK triggers the release of the substrate protein, thus completing the reaction cycle. Several rounds of ATP-dependent interactions between DnaJ, DnaK and GrpE are required for fully efficient folding. Also involved, together with DnaK and GrpE, in the DNA replication of plasmids through activation of initiation proteins.</text>
</comment>
<comment type="cofactor">
    <cofactor evidence="1">
        <name>Zn(2+)</name>
        <dbReference type="ChEBI" id="CHEBI:29105"/>
    </cofactor>
    <text evidence="1">Binds 2 Zn(2+) ions per monomer.</text>
</comment>
<comment type="subunit">
    <text evidence="1">Homodimer.</text>
</comment>
<comment type="subcellular location">
    <subcellularLocation>
        <location evidence="1">Cytoplasm</location>
    </subcellularLocation>
</comment>
<comment type="domain">
    <text evidence="1">The J domain is necessary and sufficient to stimulate DnaK ATPase activity. Zinc center 1 plays an important role in the autonomous, DnaK-independent chaperone activity of DnaJ. Zinc center 2 is essential for interaction with DnaK and for DnaJ activity.</text>
</comment>
<comment type="similarity">
    <text evidence="1">Belongs to the DnaJ family.</text>
</comment>
<feature type="chain" id="PRO_0000070704" description="Chaperone protein DnaJ">
    <location>
        <begin position="1"/>
        <end position="369"/>
    </location>
</feature>
<feature type="domain" description="J" evidence="1">
    <location>
        <begin position="5"/>
        <end position="69"/>
    </location>
</feature>
<feature type="repeat" description="CXXCXGXG motif">
    <location>
        <begin position="144"/>
        <end position="151"/>
    </location>
</feature>
<feature type="repeat" description="CXXCXGXG motif">
    <location>
        <begin position="161"/>
        <end position="168"/>
    </location>
</feature>
<feature type="repeat" description="CXXCXGXG motif">
    <location>
        <begin position="187"/>
        <end position="194"/>
    </location>
</feature>
<feature type="repeat" description="CXXCXGXG motif">
    <location>
        <begin position="201"/>
        <end position="208"/>
    </location>
</feature>
<feature type="zinc finger region" description="CR-type" evidence="1">
    <location>
        <begin position="131"/>
        <end position="213"/>
    </location>
</feature>
<feature type="binding site" evidence="1">
    <location>
        <position position="144"/>
    </location>
    <ligand>
        <name>Zn(2+)</name>
        <dbReference type="ChEBI" id="CHEBI:29105"/>
        <label>1</label>
    </ligand>
</feature>
<feature type="binding site" evidence="1">
    <location>
        <position position="147"/>
    </location>
    <ligand>
        <name>Zn(2+)</name>
        <dbReference type="ChEBI" id="CHEBI:29105"/>
        <label>1</label>
    </ligand>
</feature>
<feature type="binding site" evidence="1">
    <location>
        <position position="161"/>
    </location>
    <ligand>
        <name>Zn(2+)</name>
        <dbReference type="ChEBI" id="CHEBI:29105"/>
        <label>2</label>
    </ligand>
</feature>
<feature type="binding site" evidence="1">
    <location>
        <position position="164"/>
    </location>
    <ligand>
        <name>Zn(2+)</name>
        <dbReference type="ChEBI" id="CHEBI:29105"/>
        <label>2</label>
    </ligand>
</feature>
<feature type="binding site" evidence="1">
    <location>
        <position position="187"/>
    </location>
    <ligand>
        <name>Zn(2+)</name>
        <dbReference type="ChEBI" id="CHEBI:29105"/>
        <label>2</label>
    </ligand>
</feature>
<feature type="binding site" evidence="1">
    <location>
        <position position="190"/>
    </location>
    <ligand>
        <name>Zn(2+)</name>
        <dbReference type="ChEBI" id="CHEBI:29105"/>
        <label>2</label>
    </ligand>
</feature>
<feature type="binding site" evidence="1">
    <location>
        <position position="201"/>
    </location>
    <ligand>
        <name>Zn(2+)</name>
        <dbReference type="ChEBI" id="CHEBI:29105"/>
        <label>1</label>
    </ligand>
</feature>
<feature type="binding site" evidence="1">
    <location>
        <position position="204"/>
    </location>
    <ligand>
        <name>Zn(2+)</name>
        <dbReference type="ChEBI" id="CHEBI:29105"/>
        <label>1</label>
    </ligand>
</feature>
<organism>
    <name type="scientific">Acholeplasma laidlawii</name>
    <dbReference type="NCBI Taxonomy" id="2148"/>
    <lineage>
        <taxon>Bacteria</taxon>
        <taxon>Bacillati</taxon>
        <taxon>Mycoplasmatota</taxon>
        <taxon>Mollicutes</taxon>
        <taxon>Acholeplasmatales</taxon>
        <taxon>Acholeplasmataceae</taxon>
        <taxon>Acholeplasma</taxon>
    </lineage>
</organism>
<name>DNAJ_ACHLA</name>
<protein>
    <recommendedName>
        <fullName evidence="1">Chaperone protein DnaJ</fullName>
    </recommendedName>
</protein>
<dbReference type="EMBL" id="AF281816">
    <property type="protein sequence ID" value="AAM43823.1"/>
    <property type="molecule type" value="Genomic_DNA"/>
</dbReference>
<dbReference type="RefSeq" id="WP_012242500.1">
    <property type="nucleotide sequence ID" value="NZ_VKID01000001.1"/>
</dbReference>
<dbReference type="SMR" id="Q8L397"/>
<dbReference type="GeneID" id="41338729"/>
<dbReference type="OMA" id="MATDYYA"/>
<dbReference type="GO" id="GO:0005737">
    <property type="term" value="C:cytoplasm"/>
    <property type="evidence" value="ECO:0007669"/>
    <property type="project" value="UniProtKB-SubCell"/>
</dbReference>
<dbReference type="GO" id="GO:0005524">
    <property type="term" value="F:ATP binding"/>
    <property type="evidence" value="ECO:0007669"/>
    <property type="project" value="InterPro"/>
</dbReference>
<dbReference type="GO" id="GO:0031072">
    <property type="term" value="F:heat shock protein binding"/>
    <property type="evidence" value="ECO:0007669"/>
    <property type="project" value="InterPro"/>
</dbReference>
<dbReference type="GO" id="GO:0051082">
    <property type="term" value="F:unfolded protein binding"/>
    <property type="evidence" value="ECO:0007669"/>
    <property type="project" value="UniProtKB-UniRule"/>
</dbReference>
<dbReference type="GO" id="GO:0008270">
    <property type="term" value="F:zinc ion binding"/>
    <property type="evidence" value="ECO:0007669"/>
    <property type="project" value="UniProtKB-UniRule"/>
</dbReference>
<dbReference type="GO" id="GO:0051085">
    <property type="term" value="P:chaperone cofactor-dependent protein refolding"/>
    <property type="evidence" value="ECO:0007669"/>
    <property type="project" value="TreeGrafter"/>
</dbReference>
<dbReference type="GO" id="GO:0006260">
    <property type="term" value="P:DNA replication"/>
    <property type="evidence" value="ECO:0007669"/>
    <property type="project" value="UniProtKB-KW"/>
</dbReference>
<dbReference type="GO" id="GO:0042026">
    <property type="term" value="P:protein refolding"/>
    <property type="evidence" value="ECO:0007669"/>
    <property type="project" value="TreeGrafter"/>
</dbReference>
<dbReference type="GO" id="GO:0009408">
    <property type="term" value="P:response to heat"/>
    <property type="evidence" value="ECO:0007669"/>
    <property type="project" value="InterPro"/>
</dbReference>
<dbReference type="CDD" id="cd06257">
    <property type="entry name" value="DnaJ"/>
    <property type="match status" value="1"/>
</dbReference>
<dbReference type="CDD" id="cd10747">
    <property type="entry name" value="DnaJ_C"/>
    <property type="match status" value="1"/>
</dbReference>
<dbReference type="CDD" id="cd10719">
    <property type="entry name" value="DnaJ_zf"/>
    <property type="match status" value="1"/>
</dbReference>
<dbReference type="FunFam" id="2.60.260.20:FF:000005">
    <property type="entry name" value="Chaperone protein dnaJ 1, mitochondrial"/>
    <property type="match status" value="1"/>
</dbReference>
<dbReference type="FunFam" id="1.10.287.110:FF:000031">
    <property type="entry name" value="Molecular chaperone DnaJ"/>
    <property type="match status" value="1"/>
</dbReference>
<dbReference type="FunFam" id="2.10.230.10:FF:000002">
    <property type="entry name" value="Molecular chaperone DnaJ"/>
    <property type="match status" value="1"/>
</dbReference>
<dbReference type="Gene3D" id="1.10.287.110">
    <property type="entry name" value="DnaJ domain"/>
    <property type="match status" value="1"/>
</dbReference>
<dbReference type="Gene3D" id="2.10.230.10">
    <property type="entry name" value="Heat shock protein DnaJ, cysteine-rich domain"/>
    <property type="match status" value="1"/>
</dbReference>
<dbReference type="Gene3D" id="2.60.260.20">
    <property type="entry name" value="Urease metallochaperone UreE, N-terminal domain"/>
    <property type="match status" value="2"/>
</dbReference>
<dbReference type="HAMAP" id="MF_01152">
    <property type="entry name" value="DnaJ"/>
    <property type="match status" value="1"/>
</dbReference>
<dbReference type="InterPro" id="IPR012724">
    <property type="entry name" value="DnaJ"/>
</dbReference>
<dbReference type="InterPro" id="IPR002939">
    <property type="entry name" value="DnaJ_C"/>
</dbReference>
<dbReference type="InterPro" id="IPR001623">
    <property type="entry name" value="DnaJ_domain"/>
</dbReference>
<dbReference type="InterPro" id="IPR018253">
    <property type="entry name" value="DnaJ_domain_CS"/>
</dbReference>
<dbReference type="InterPro" id="IPR008971">
    <property type="entry name" value="HSP40/DnaJ_pept-bd"/>
</dbReference>
<dbReference type="InterPro" id="IPR001305">
    <property type="entry name" value="HSP_DnaJ_Cys-rich_dom"/>
</dbReference>
<dbReference type="InterPro" id="IPR036410">
    <property type="entry name" value="HSP_DnaJ_Cys-rich_dom_sf"/>
</dbReference>
<dbReference type="InterPro" id="IPR036869">
    <property type="entry name" value="J_dom_sf"/>
</dbReference>
<dbReference type="NCBIfam" id="TIGR02349">
    <property type="entry name" value="DnaJ_bact"/>
    <property type="match status" value="1"/>
</dbReference>
<dbReference type="NCBIfam" id="NF008035">
    <property type="entry name" value="PRK10767.1"/>
    <property type="match status" value="1"/>
</dbReference>
<dbReference type="PANTHER" id="PTHR43096:SF48">
    <property type="entry name" value="CHAPERONE PROTEIN DNAJ"/>
    <property type="match status" value="1"/>
</dbReference>
<dbReference type="PANTHER" id="PTHR43096">
    <property type="entry name" value="DNAJ HOMOLOG 1, MITOCHONDRIAL-RELATED"/>
    <property type="match status" value="1"/>
</dbReference>
<dbReference type="Pfam" id="PF00226">
    <property type="entry name" value="DnaJ"/>
    <property type="match status" value="1"/>
</dbReference>
<dbReference type="Pfam" id="PF01556">
    <property type="entry name" value="DnaJ_C"/>
    <property type="match status" value="1"/>
</dbReference>
<dbReference type="Pfam" id="PF00684">
    <property type="entry name" value="DnaJ_CXXCXGXG"/>
    <property type="match status" value="1"/>
</dbReference>
<dbReference type="PRINTS" id="PR00625">
    <property type="entry name" value="JDOMAIN"/>
</dbReference>
<dbReference type="SMART" id="SM00271">
    <property type="entry name" value="DnaJ"/>
    <property type="match status" value="1"/>
</dbReference>
<dbReference type="SUPFAM" id="SSF46565">
    <property type="entry name" value="Chaperone J-domain"/>
    <property type="match status" value="1"/>
</dbReference>
<dbReference type="SUPFAM" id="SSF57938">
    <property type="entry name" value="DnaJ/Hsp40 cysteine-rich domain"/>
    <property type="match status" value="1"/>
</dbReference>
<dbReference type="SUPFAM" id="SSF49493">
    <property type="entry name" value="HSP40/DnaJ peptide-binding domain"/>
    <property type="match status" value="2"/>
</dbReference>
<dbReference type="PROSITE" id="PS00636">
    <property type="entry name" value="DNAJ_1"/>
    <property type="match status" value="1"/>
</dbReference>
<dbReference type="PROSITE" id="PS50076">
    <property type="entry name" value="DNAJ_2"/>
    <property type="match status" value="1"/>
</dbReference>
<dbReference type="PROSITE" id="PS51188">
    <property type="entry name" value="ZF_CR"/>
    <property type="match status" value="1"/>
</dbReference>
<accession>Q8L397</accession>
<sequence length="369" mass="40433">MAKRDYYDVLGISKSASQDEIKKAYRSLAKKYHPDVSKEKDAETKFKEVQEAYDVLNDSNKKAQYDRFGHAGTGQDPFGGAGGGFGGFGGFDDIISQFFGGGQTRRTRQTSNVGEDLNMRMTIDFMEAVLGTTKNVSVDITQDCGHCHGSGAESSKDVHTCSKCHGQGFINVDQRTMFGTMRSQQVCPQCQGEGQTIDNKCHVCSGAGRVKAKKTVDVKVPAGVDNEMTLRVPGYGNGGRKGAESGDLYITFRVKPHKIFKRRGSDIILDVPITFTQAALGDKIDIPTIYGEVELTIPAGIQSGTELKLKNKGTKDPRTGKTGDQHVIVNIETPKNLSSEEKKLFEQLSKLDSPRKKSGWDKFKSFFTN</sequence>
<keyword id="KW-0143">Chaperone</keyword>
<keyword id="KW-0963">Cytoplasm</keyword>
<keyword id="KW-0235">DNA replication</keyword>
<keyword id="KW-0479">Metal-binding</keyword>
<keyword id="KW-0677">Repeat</keyword>
<keyword id="KW-0346">Stress response</keyword>
<keyword id="KW-0862">Zinc</keyword>
<keyword id="KW-0863">Zinc-finger</keyword>
<proteinExistence type="inferred from homology"/>